<keyword id="KW-0378">Hydrolase</keyword>
<keyword id="KW-1185">Reference proteome</keyword>
<keyword id="KW-0719">Serine esterase</keyword>
<proteinExistence type="inferred from homology"/>
<dbReference type="EC" id="3.1.2.12"/>
<dbReference type="EMBL" id="CP000038">
    <property type="protein sequence ID" value="AAZ88860.1"/>
    <property type="molecule type" value="Genomic_DNA"/>
</dbReference>
<dbReference type="RefSeq" id="WP_000425441.1">
    <property type="nucleotide sequence ID" value="NC_007384.1"/>
</dbReference>
<dbReference type="SMR" id="Q3Z052"/>
<dbReference type="ESTHER" id="shiss-yeiG">
    <property type="family name" value="A85-EsteraseD-FGH"/>
</dbReference>
<dbReference type="GeneID" id="93775028"/>
<dbReference type="KEGG" id="ssn:SSON_2210"/>
<dbReference type="HOGENOM" id="CLU_056472_0_0_6"/>
<dbReference type="Proteomes" id="UP000002529">
    <property type="component" value="Chromosome"/>
</dbReference>
<dbReference type="GO" id="GO:0005829">
    <property type="term" value="C:cytosol"/>
    <property type="evidence" value="ECO:0007669"/>
    <property type="project" value="TreeGrafter"/>
</dbReference>
<dbReference type="GO" id="GO:0052689">
    <property type="term" value="F:carboxylic ester hydrolase activity"/>
    <property type="evidence" value="ECO:0007669"/>
    <property type="project" value="UniProtKB-KW"/>
</dbReference>
<dbReference type="GO" id="GO:0018738">
    <property type="term" value="F:S-formylglutathione hydrolase activity"/>
    <property type="evidence" value="ECO:0007669"/>
    <property type="project" value="UniProtKB-EC"/>
</dbReference>
<dbReference type="GO" id="GO:0046294">
    <property type="term" value="P:formaldehyde catabolic process"/>
    <property type="evidence" value="ECO:0007669"/>
    <property type="project" value="InterPro"/>
</dbReference>
<dbReference type="FunFam" id="3.40.50.1820:FF:000002">
    <property type="entry name" value="S-formylglutathione hydrolase"/>
    <property type="match status" value="1"/>
</dbReference>
<dbReference type="Gene3D" id="3.40.50.1820">
    <property type="entry name" value="alpha/beta hydrolase"/>
    <property type="match status" value="1"/>
</dbReference>
<dbReference type="InterPro" id="IPR029058">
    <property type="entry name" value="AB_hydrolase_fold"/>
</dbReference>
<dbReference type="InterPro" id="IPR000801">
    <property type="entry name" value="Esterase-like"/>
</dbReference>
<dbReference type="InterPro" id="IPR014186">
    <property type="entry name" value="S-formylglutathione_hydrol"/>
</dbReference>
<dbReference type="NCBIfam" id="TIGR02821">
    <property type="entry name" value="fghA_ester_D"/>
    <property type="match status" value="1"/>
</dbReference>
<dbReference type="PANTHER" id="PTHR10061">
    <property type="entry name" value="S-FORMYLGLUTATHIONE HYDROLASE"/>
    <property type="match status" value="1"/>
</dbReference>
<dbReference type="PANTHER" id="PTHR10061:SF1">
    <property type="entry name" value="S-FORMYLGLUTATHIONE HYDROLASE YEIG"/>
    <property type="match status" value="1"/>
</dbReference>
<dbReference type="Pfam" id="PF00756">
    <property type="entry name" value="Esterase"/>
    <property type="match status" value="1"/>
</dbReference>
<dbReference type="SUPFAM" id="SSF53474">
    <property type="entry name" value="alpha/beta-Hydrolases"/>
    <property type="match status" value="1"/>
</dbReference>
<accession>Q3Z052</accession>
<name>SFGH2_SHISS</name>
<reference key="1">
    <citation type="journal article" date="2005" name="Nucleic Acids Res.">
        <title>Genome dynamics and diversity of Shigella species, the etiologic agents of bacillary dysentery.</title>
        <authorList>
            <person name="Yang F."/>
            <person name="Yang J."/>
            <person name="Zhang X."/>
            <person name="Chen L."/>
            <person name="Jiang Y."/>
            <person name="Yan Y."/>
            <person name="Tang X."/>
            <person name="Wang J."/>
            <person name="Xiong Z."/>
            <person name="Dong J."/>
            <person name="Xue Y."/>
            <person name="Zhu Y."/>
            <person name="Xu X."/>
            <person name="Sun L."/>
            <person name="Chen S."/>
            <person name="Nie H."/>
            <person name="Peng J."/>
            <person name="Xu J."/>
            <person name="Wang Y."/>
            <person name="Yuan Z."/>
            <person name="Wen Y."/>
            <person name="Yao Z."/>
            <person name="Shen Y."/>
            <person name="Qiang B."/>
            <person name="Hou Y."/>
            <person name="Yu J."/>
            <person name="Jin Q."/>
        </authorList>
    </citation>
    <scope>NUCLEOTIDE SEQUENCE [LARGE SCALE GENOMIC DNA]</scope>
    <source>
        <strain>Ss046</strain>
    </source>
</reference>
<evidence type="ECO:0000250" key="1"/>
<evidence type="ECO:0000305" key="2"/>
<sequence>MEMLEEHRCFEGWQQRWRHDSSTLNCPMTFSIFLPPPRDHTPPPVLYWLSGLTCNDENFTTKAGAQRVAAELGIVLVMPDTSPRGEKVANDDGYDLGQGAGFYLNATQPPWATHYRMYDYLRDELPALVQSQFNVSDRCAISGHSMGGHGALIMALKNPGKYTSVSAFAPIVNPCSVPWGIKAFSTYLGEDKNAWLEWDSCALMYASNAQDAIPTLIDQGDNDQFLADQLQPAVLAEAARQKAWPMTLRIQPGYDHSYYFIASFIEDHLRFHAQYLLK</sequence>
<feature type="chain" id="PRO_0000341678" description="S-formylglutathione hydrolase YeiG">
    <location>
        <begin position="1"/>
        <end position="278"/>
    </location>
</feature>
<feature type="active site" description="Charge relay system" evidence="1">
    <location>
        <position position="145"/>
    </location>
</feature>
<feature type="active site" description="Charge relay system" evidence="1">
    <location>
        <position position="223"/>
    </location>
</feature>
<feature type="active site" description="Charge relay system" evidence="1">
    <location>
        <position position="256"/>
    </location>
</feature>
<protein>
    <recommendedName>
        <fullName>S-formylglutathione hydrolase YeiG</fullName>
        <shortName>FGH</shortName>
        <ecNumber>3.1.2.12</ecNumber>
    </recommendedName>
</protein>
<organism>
    <name type="scientific">Shigella sonnei (strain Ss046)</name>
    <dbReference type="NCBI Taxonomy" id="300269"/>
    <lineage>
        <taxon>Bacteria</taxon>
        <taxon>Pseudomonadati</taxon>
        <taxon>Pseudomonadota</taxon>
        <taxon>Gammaproteobacteria</taxon>
        <taxon>Enterobacterales</taxon>
        <taxon>Enterobacteriaceae</taxon>
        <taxon>Shigella</taxon>
    </lineage>
</organism>
<gene>
    <name type="primary">yeiG</name>
    <name type="ordered locus">SSON_2210</name>
</gene>
<comment type="function">
    <text evidence="1">Serine hydrolase involved in the detoxification of formaldehyde. Hydrolyzes S-formylglutathione to glutathione and formate (By similarity).</text>
</comment>
<comment type="catalytic activity">
    <reaction>
        <text>S-formylglutathione + H2O = formate + glutathione + H(+)</text>
        <dbReference type="Rhea" id="RHEA:14961"/>
        <dbReference type="ChEBI" id="CHEBI:15377"/>
        <dbReference type="ChEBI" id="CHEBI:15378"/>
        <dbReference type="ChEBI" id="CHEBI:15740"/>
        <dbReference type="ChEBI" id="CHEBI:57688"/>
        <dbReference type="ChEBI" id="CHEBI:57925"/>
        <dbReference type="EC" id="3.1.2.12"/>
    </reaction>
</comment>
<comment type="similarity">
    <text evidence="2">Belongs to the esterase D family.</text>
</comment>